<dbReference type="PIR" id="A91709">
    <property type="entry name" value="HBWS"/>
</dbReference>
<dbReference type="SMR" id="P68945"/>
<dbReference type="GO" id="GO:0072562">
    <property type="term" value="C:blood microparticle"/>
    <property type="evidence" value="ECO:0007669"/>
    <property type="project" value="TreeGrafter"/>
</dbReference>
<dbReference type="GO" id="GO:0031838">
    <property type="term" value="C:haptoglobin-hemoglobin complex"/>
    <property type="evidence" value="ECO:0007669"/>
    <property type="project" value="TreeGrafter"/>
</dbReference>
<dbReference type="GO" id="GO:0005833">
    <property type="term" value="C:hemoglobin complex"/>
    <property type="evidence" value="ECO:0007669"/>
    <property type="project" value="InterPro"/>
</dbReference>
<dbReference type="GO" id="GO:0031720">
    <property type="term" value="F:haptoglobin binding"/>
    <property type="evidence" value="ECO:0007669"/>
    <property type="project" value="TreeGrafter"/>
</dbReference>
<dbReference type="GO" id="GO:0020037">
    <property type="term" value="F:heme binding"/>
    <property type="evidence" value="ECO:0007669"/>
    <property type="project" value="InterPro"/>
</dbReference>
<dbReference type="GO" id="GO:0046872">
    <property type="term" value="F:metal ion binding"/>
    <property type="evidence" value="ECO:0007669"/>
    <property type="project" value="UniProtKB-KW"/>
</dbReference>
<dbReference type="GO" id="GO:0043177">
    <property type="term" value="F:organic acid binding"/>
    <property type="evidence" value="ECO:0007669"/>
    <property type="project" value="TreeGrafter"/>
</dbReference>
<dbReference type="GO" id="GO:0019825">
    <property type="term" value="F:oxygen binding"/>
    <property type="evidence" value="ECO:0007669"/>
    <property type="project" value="InterPro"/>
</dbReference>
<dbReference type="GO" id="GO:0005344">
    <property type="term" value="F:oxygen carrier activity"/>
    <property type="evidence" value="ECO:0007669"/>
    <property type="project" value="UniProtKB-KW"/>
</dbReference>
<dbReference type="GO" id="GO:0004601">
    <property type="term" value="F:peroxidase activity"/>
    <property type="evidence" value="ECO:0007669"/>
    <property type="project" value="TreeGrafter"/>
</dbReference>
<dbReference type="GO" id="GO:0042744">
    <property type="term" value="P:hydrogen peroxide catabolic process"/>
    <property type="evidence" value="ECO:0007669"/>
    <property type="project" value="TreeGrafter"/>
</dbReference>
<dbReference type="CDD" id="cd08925">
    <property type="entry name" value="Hb-beta-like"/>
    <property type="match status" value="1"/>
</dbReference>
<dbReference type="FunFam" id="1.10.490.10:FF:000001">
    <property type="entry name" value="Hemoglobin subunit beta"/>
    <property type="match status" value="1"/>
</dbReference>
<dbReference type="Gene3D" id="1.10.490.10">
    <property type="entry name" value="Globins"/>
    <property type="match status" value="1"/>
</dbReference>
<dbReference type="InterPro" id="IPR000971">
    <property type="entry name" value="Globin"/>
</dbReference>
<dbReference type="InterPro" id="IPR009050">
    <property type="entry name" value="Globin-like_sf"/>
</dbReference>
<dbReference type="InterPro" id="IPR012292">
    <property type="entry name" value="Globin/Proto"/>
</dbReference>
<dbReference type="InterPro" id="IPR002337">
    <property type="entry name" value="Hemoglobin_b"/>
</dbReference>
<dbReference type="InterPro" id="IPR050056">
    <property type="entry name" value="Hemoglobin_oxygen_transport"/>
</dbReference>
<dbReference type="PANTHER" id="PTHR11442">
    <property type="entry name" value="HEMOGLOBIN FAMILY MEMBER"/>
    <property type="match status" value="1"/>
</dbReference>
<dbReference type="PANTHER" id="PTHR11442:SF7">
    <property type="entry name" value="HEMOGLOBIN SUBUNIT EPSILON"/>
    <property type="match status" value="1"/>
</dbReference>
<dbReference type="Pfam" id="PF00042">
    <property type="entry name" value="Globin"/>
    <property type="match status" value="1"/>
</dbReference>
<dbReference type="PRINTS" id="PR00814">
    <property type="entry name" value="BETAHAEM"/>
</dbReference>
<dbReference type="SUPFAM" id="SSF46458">
    <property type="entry name" value="Globin-like"/>
    <property type="match status" value="1"/>
</dbReference>
<dbReference type="PROSITE" id="PS01033">
    <property type="entry name" value="GLOBIN"/>
    <property type="match status" value="1"/>
</dbReference>
<proteinExistence type="evidence at protein level"/>
<protein>
    <recommendedName>
        <fullName>Hemoglobin subunit beta</fullName>
    </recommendedName>
    <alternativeName>
        <fullName>Beta-globin</fullName>
    </alternativeName>
    <alternativeName>
        <fullName>Hemoglobin beta chain</fullName>
    </alternativeName>
</protein>
<name>HBB_CYGOL</name>
<reference key="1">
    <citation type="journal article" date="1982" name="Hoppe-Seyler's Z. Physiol. Chem.">
        <title>The amino acid sequence of Canada goose (Branta canadensis) and mute swan (Cygnus olor) hemoglobins. Two different species with identical beta-chains.</title>
        <authorList>
            <person name="Oberthur W."/>
            <person name="Godovac-Zimmermann J."/>
            <person name="Braunitzer G."/>
        </authorList>
    </citation>
    <scope>PROTEIN SEQUENCE</scope>
</reference>
<evidence type="ECO:0000255" key="1">
    <source>
        <dbReference type="PROSITE-ProRule" id="PRU00238"/>
    </source>
</evidence>
<feature type="chain" id="PRO_0000052941" description="Hemoglobin subunit beta">
    <location>
        <begin position="1"/>
        <end position="146"/>
    </location>
</feature>
<feature type="domain" description="Globin" evidence="1">
    <location>
        <begin position="2"/>
        <end position="146"/>
    </location>
</feature>
<feature type="binding site" description="distal binding residue">
    <location>
        <position position="63"/>
    </location>
    <ligand>
        <name>heme b</name>
        <dbReference type="ChEBI" id="CHEBI:60344"/>
    </ligand>
    <ligandPart>
        <name>Fe</name>
        <dbReference type="ChEBI" id="CHEBI:18248"/>
    </ligandPart>
</feature>
<feature type="binding site" description="proximal binding residue">
    <location>
        <position position="92"/>
    </location>
    <ligand>
        <name>heme b</name>
        <dbReference type="ChEBI" id="CHEBI:60344"/>
    </ligand>
    <ligandPart>
        <name>Fe</name>
        <dbReference type="ChEBI" id="CHEBI:18248"/>
    </ligandPart>
</feature>
<keyword id="KW-0903">Direct protein sequencing</keyword>
<keyword id="KW-0349">Heme</keyword>
<keyword id="KW-0408">Iron</keyword>
<keyword id="KW-0479">Metal-binding</keyword>
<keyword id="KW-0561">Oxygen transport</keyword>
<keyword id="KW-0813">Transport</keyword>
<gene>
    <name type="primary">HBB</name>
</gene>
<sequence>VHWTAEEKQLITGLWGKVNVADCGAEALARLLIVYPWTQRFFSSFGNLSSPTAILGNPMVRAHGKKVLTSFGDAVKNLDNIKNTFAQLSELHCDKLHVDPENFRLLGDILIIVLAAHFAKDFTPDCQAAWQKLVRVVAHALARKYH</sequence>
<comment type="function">
    <text>Involved in oxygen transport from the lung to the various peripheral tissues.</text>
</comment>
<comment type="subunit">
    <text>Heterotetramer of two alpha chains and two beta chains.</text>
</comment>
<comment type="tissue specificity">
    <text>Red blood cells.</text>
</comment>
<comment type="similarity">
    <text evidence="1">Belongs to the globin family.</text>
</comment>
<organism>
    <name type="scientific">Cygnus olor</name>
    <name type="common">Mute swan</name>
    <name type="synonym">Anas olor</name>
    <dbReference type="NCBI Taxonomy" id="8869"/>
    <lineage>
        <taxon>Eukaryota</taxon>
        <taxon>Metazoa</taxon>
        <taxon>Chordata</taxon>
        <taxon>Craniata</taxon>
        <taxon>Vertebrata</taxon>
        <taxon>Euteleostomi</taxon>
        <taxon>Archelosauria</taxon>
        <taxon>Archosauria</taxon>
        <taxon>Dinosauria</taxon>
        <taxon>Saurischia</taxon>
        <taxon>Theropoda</taxon>
        <taxon>Coelurosauria</taxon>
        <taxon>Aves</taxon>
        <taxon>Neognathae</taxon>
        <taxon>Galloanserae</taxon>
        <taxon>Anseriformes</taxon>
        <taxon>Anatidae</taxon>
        <taxon>Anserinae</taxon>
        <taxon>Cygnus</taxon>
    </lineage>
</organism>
<accession>P68945</accession>
<accession>P02119</accession>